<comment type="function">
    <text evidence="1">With S4 and S12 plays an important role in translational accuracy.</text>
</comment>
<comment type="function">
    <text evidence="1">Located at the back of the 30S subunit body where it stabilizes the conformation of the head with respect to the body.</text>
</comment>
<comment type="subunit">
    <text evidence="1">Part of the 30S ribosomal subunit. Contacts proteins S4 and S8.</text>
</comment>
<comment type="domain">
    <text>The N-terminal domain interacts with the head of the 30S subunit; the C-terminal domain interacts with the body and contacts protein S4. The interaction surface between S4 and S5 is involved in control of translational fidelity.</text>
</comment>
<comment type="similarity">
    <text evidence="1">Belongs to the universal ribosomal protein uS5 family.</text>
</comment>
<protein>
    <recommendedName>
        <fullName evidence="1">Small ribosomal subunit protein uS5</fullName>
    </recommendedName>
    <alternativeName>
        <fullName evidence="2">30S ribosomal protein S5</fullName>
    </alternativeName>
</protein>
<evidence type="ECO:0000255" key="1">
    <source>
        <dbReference type="HAMAP-Rule" id="MF_01307"/>
    </source>
</evidence>
<evidence type="ECO:0000305" key="2"/>
<organism>
    <name type="scientific">Verminephrobacter eiseniae (strain EF01-2)</name>
    <dbReference type="NCBI Taxonomy" id="391735"/>
    <lineage>
        <taxon>Bacteria</taxon>
        <taxon>Pseudomonadati</taxon>
        <taxon>Pseudomonadota</taxon>
        <taxon>Betaproteobacteria</taxon>
        <taxon>Burkholderiales</taxon>
        <taxon>Comamonadaceae</taxon>
        <taxon>Verminephrobacter</taxon>
    </lineage>
</organism>
<dbReference type="EMBL" id="CP000542">
    <property type="protein sequence ID" value="ABM58056.1"/>
    <property type="molecule type" value="Genomic_DNA"/>
</dbReference>
<dbReference type="RefSeq" id="WP_011810059.1">
    <property type="nucleotide sequence ID" value="NC_008786.1"/>
</dbReference>
<dbReference type="SMR" id="A1WK99"/>
<dbReference type="STRING" id="391735.Veis_2308"/>
<dbReference type="GeneID" id="76460873"/>
<dbReference type="KEGG" id="vei:Veis_2308"/>
<dbReference type="eggNOG" id="COG0098">
    <property type="taxonomic scope" value="Bacteria"/>
</dbReference>
<dbReference type="HOGENOM" id="CLU_065898_2_2_4"/>
<dbReference type="OrthoDB" id="9809045at2"/>
<dbReference type="Proteomes" id="UP000000374">
    <property type="component" value="Chromosome"/>
</dbReference>
<dbReference type="GO" id="GO:0015935">
    <property type="term" value="C:small ribosomal subunit"/>
    <property type="evidence" value="ECO:0007669"/>
    <property type="project" value="InterPro"/>
</dbReference>
<dbReference type="GO" id="GO:0019843">
    <property type="term" value="F:rRNA binding"/>
    <property type="evidence" value="ECO:0007669"/>
    <property type="project" value="UniProtKB-UniRule"/>
</dbReference>
<dbReference type="GO" id="GO:0003735">
    <property type="term" value="F:structural constituent of ribosome"/>
    <property type="evidence" value="ECO:0007669"/>
    <property type="project" value="InterPro"/>
</dbReference>
<dbReference type="GO" id="GO:0006412">
    <property type="term" value="P:translation"/>
    <property type="evidence" value="ECO:0007669"/>
    <property type="project" value="UniProtKB-UniRule"/>
</dbReference>
<dbReference type="FunFam" id="3.30.160.20:FF:000001">
    <property type="entry name" value="30S ribosomal protein S5"/>
    <property type="match status" value="1"/>
</dbReference>
<dbReference type="FunFam" id="3.30.230.10:FF:000002">
    <property type="entry name" value="30S ribosomal protein S5"/>
    <property type="match status" value="1"/>
</dbReference>
<dbReference type="Gene3D" id="3.30.160.20">
    <property type="match status" value="1"/>
</dbReference>
<dbReference type="Gene3D" id="3.30.230.10">
    <property type="match status" value="1"/>
</dbReference>
<dbReference type="HAMAP" id="MF_01307_B">
    <property type="entry name" value="Ribosomal_uS5_B"/>
    <property type="match status" value="1"/>
</dbReference>
<dbReference type="InterPro" id="IPR020568">
    <property type="entry name" value="Ribosomal_Su5_D2-typ_SF"/>
</dbReference>
<dbReference type="InterPro" id="IPR000851">
    <property type="entry name" value="Ribosomal_uS5"/>
</dbReference>
<dbReference type="InterPro" id="IPR005712">
    <property type="entry name" value="Ribosomal_uS5_bac-type"/>
</dbReference>
<dbReference type="InterPro" id="IPR005324">
    <property type="entry name" value="Ribosomal_uS5_C"/>
</dbReference>
<dbReference type="InterPro" id="IPR013810">
    <property type="entry name" value="Ribosomal_uS5_N"/>
</dbReference>
<dbReference type="InterPro" id="IPR018192">
    <property type="entry name" value="Ribosomal_uS5_N_CS"/>
</dbReference>
<dbReference type="InterPro" id="IPR014721">
    <property type="entry name" value="Ribsml_uS5_D2-typ_fold_subgr"/>
</dbReference>
<dbReference type="NCBIfam" id="TIGR01021">
    <property type="entry name" value="rpsE_bact"/>
    <property type="match status" value="1"/>
</dbReference>
<dbReference type="PANTHER" id="PTHR48277">
    <property type="entry name" value="MITOCHONDRIAL RIBOSOMAL PROTEIN S5"/>
    <property type="match status" value="1"/>
</dbReference>
<dbReference type="PANTHER" id="PTHR48277:SF1">
    <property type="entry name" value="MITOCHONDRIAL RIBOSOMAL PROTEIN S5"/>
    <property type="match status" value="1"/>
</dbReference>
<dbReference type="Pfam" id="PF00333">
    <property type="entry name" value="Ribosomal_S5"/>
    <property type="match status" value="1"/>
</dbReference>
<dbReference type="Pfam" id="PF03719">
    <property type="entry name" value="Ribosomal_S5_C"/>
    <property type="match status" value="1"/>
</dbReference>
<dbReference type="SUPFAM" id="SSF54768">
    <property type="entry name" value="dsRNA-binding domain-like"/>
    <property type="match status" value="1"/>
</dbReference>
<dbReference type="SUPFAM" id="SSF54211">
    <property type="entry name" value="Ribosomal protein S5 domain 2-like"/>
    <property type="match status" value="1"/>
</dbReference>
<dbReference type="PROSITE" id="PS00585">
    <property type="entry name" value="RIBOSOMAL_S5"/>
    <property type="match status" value="1"/>
</dbReference>
<dbReference type="PROSITE" id="PS50881">
    <property type="entry name" value="S5_DSRBD"/>
    <property type="match status" value="1"/>
</dbReference>
<name>RS5_VEREI</name>
<reference key="1">
    <citation type="submission" date="2006-12" db="EMBL/GenBank/DDBJ databases">
        <title>Complete sequence of chromosome 1 of Verminephrobacter eiseniae EF01-2.</title>
        <authorList>
            <person name="Copeland A."/>
            <person name="Lucas S."/>
            <person name="Lapidus A."/>
            <person name="Barry K."/>
            <person name="Detter J.C."/>
            <person name="Glavina del Rio T."/>
            <person name="Dalin E."/>
            <person name="Tice H."/>
            <person name="Pitluck S."/>
            <person name="Chertkov O."/>
            <person name="Brettin T."/>
            <person name="Bruce D."/>
            <person name="Han C."/>
            <person name="Tapia R."/>
            <person name="Gilna P."/>
            <person name="Schmutz J."/>
            <person name="Larimer F."/>
            <person name="Land M."/>
            <person name="Hauser L."/>
            <person name="Kyrpides N."/>
            <person name="Kim E."/>
            <person name="Stahl D."/>
            <person name="Richardson P."/>
        </authorList>
    </citation>
    <scope>NUCLEOTIDE SEQUENCE [LARGE SCALE GENOMIC DNA]</scope>
    <source>
        <strain>EF01-2</strain>
    </source>
</reference>
<accession>A1WK99</accession>
<gene>
    <name evidence="1" type="primary">rpsE</name>
    <name type="ordered locus">Veis_2308</name>
</gene>
<proteinExistence type="inferred from homology"/>
<feature type="chain" id="PRO_0000323224" description="Small ribosomal subunit protein uS5">
    <location>
        <begin position="1"/>
        <end position="172"/>
    </location>
</feature>
<feature type="domain" description="S5 DRBM" evidence="1">
    <location>
        <begin position="17"/>
        <end position="80"/>
    </location>
</feature>
<sequence length="172" mass="18042">MAKFQPKVQDEGRDDGLREKMIAVNRVTKVVKGGRILGFAALTVVGDGDGRVGMGKGKSKEVPAAVQKAMEEARRNMVKVSLKNGTIHHNVTGHHGAAVVMMAPAPKGAGIIAGGPMRAVFEVLGVTDIVAKSHGSSNPYNMVRATFDALVHSTTASQVAAKRGKTVEDIFA</sequence>
<keyword id="KW-1185">Reference proteome</keyword>
<keyword id="KW-0687">Ribonucleoprotein</keyword>
<keyword id="KW-0689">Ribosomal protein</keyword>
<keyword id="KW-0694">RNA-binding</keyword>
<keyword id="KW-0699">rRNA-binding</keyword>